<protein>
    <recommendedName>
        <fullName evidence="1">UDP-2,3-diacylglucosamine hydrolase</fullName>
        <ecNumber evidence="1">3.6.1.54</ecNumber>
    </recommendedName>
    <alternativeName>
        <fullName evidence="1">UDP-2,3-diacylglucosamine diphosphatase</fullName>
    </alternativeName>
</protein>
<feature type="chain" id="PRO_0000214127" description="UDP-2,3-diacylglucosamine hydrolase">
    <location>
        <begin position="1"/>
        <end position="243"/>
    </location>
</feature>
<feature type="binding site" evidence="1">
    <location>
        <position position="8"/>
    </location>
    <ligand>
        <name>Mn(2+)</name>
        <dbReference type="ChEBI" id="CHEBI:29035"/>
        <label>1</label>
    </ligand>
</feature>
<feature type="binding site" evidence="1">
    <location>
        <position position="10"/>
    </location>
    <ligand>
        <name>Mn(2+)</name>
        <dbReference type="ChEBI" id="CHEBI:29035"/>
        <label>1</label>
    </ligand>
</feature>
<feature type="binding site" evidence="1">
    <location>
        <position position="41"/>
    </location>
    <ligand>
        <name>Mn(2+)</name>
        <dbReference type="ChEBI" id="CHEBI:29035"/>
        <label>1</label>
    </ligand>
</feature>
<feature type="binding site" evidence="1">
    <location>
        <position position="41"/>
    </location>
    <ligand>
        <name>Mn(2+)</name>
        <dbReference type="ChEBI" id="CHEBI:29035"/>
        <label>2</label>
    </ligand>
</feature>
<feature type="binding site" evidence="1">
    <location>
        <begin position="79"/>
        <end position="80"/>
    </location>
    <ligand>
        <name>substrate</name>
    </ligand>
</feature>
<feature type="binding site" evidence="1">
    <location>
        <position position="79"/>
    </location>
    <ligand>
        <name>Mn(2+)</name>
        <dbReference type="ChEBI" id="CHEBI:29035"/>
        <label>2</label>
    </ligand>
</feature>
<feature type="binding site" evidence="1">
    <location>
        <position position="114"/>
    </location>
    <ligand>
        <name>Mn(2+)</name>
        <dbReference type="ChEBI" id="CHEBI:29035"/>
        <label>2</label>
    </ligand>
</feature>
<feature type="binding site" evidence="1">
    <location>
        <position position="122"/>
    </location>
    <ligand>
        <name>substrate</name>
    </ligand>
</feature>
<feature type="binding site" evidence="1">
    <location>
        <position position="164"/>
    </location>
    <ligand>
        <name>substrate</name>
    </ligand>
</feature>
<feature type="binding site" evidence="1">
    <location>
        <position position="167"/>
    </location>
    <ligand>
        <name>substrate</name>
    </ligand>
</feature>
<feature type="binding site" evidence="1">
    <location>
        <position position="195"/>
    </location>
    <ligand>
        <name>Mn(2+)</name>
        <dbReference type="ChEBI" id="CHEBI:29035"/>
        <label>2</label>
    </ligand>
</feature>
<feature type="binding site" evidence="1">
    <location>
        <position position="195"/>
    </location>
    <ligand>
        <name>substrate</name>
    </ligand>
</feature>
<feature type="binding site" evidence="1">
    <location>
        <position position="197"/>
    </location>
    <ligand>
        <name>Mn(2+)</name>
        <dbReference type="ChEBI" id="CHEBI:29035"/>
        <label>1</label>
    </ligand>
</feature>
<proteinExistence type="inferred from homology"/>
<evidence type="ECO:0000255" key="1">
    <source>
        <dbReference type="HAMAP-Rule" id="MF_00575"/>
    </source>
</evidence>
<keyword id="KW-0997">Cell inner membrane</keyword>
<keyword id="KW-1003">Cell membrane</keyword>
<keyword id="KW-0378">Hydrolase</keyword>
<keyword id="KW-0441">Lipid A biosynthesis</keyword>
<keyword id="KW-0444">Lipid biosynthesis</keyword>
<keyword id="KW-0443">Lipid metabolism</keyword>
<keyword id="KW-0464">Manganese</keyword>
<keyword id="KW-0472">Membrane</keyword>
<keyword id="KW-0479">Metal-binding</keyword>
<comment type="function">
    <text evidence="1">Hydrolyzes the pyrophosphate bond of UDP-2,3-diacylglucosamine to yield 2,3-diacylglucosamine 1-phosphate (lipid X) and UMP by catalyzing the attack of water at the alpha-P atom. Involved in the biosynthesis of lipid A, a phosphorylated glycolipid that anchors the lipopolysaccharide to the outer membrane of the cell.</text>
</comment>
<comment type="catalytic activity">
    <reaction evidence="1">
        <text>UDP-2-N,3-O-bis[(3R)-3-hydroxytetradecanoyl]-alpha-D-glucosamine + H2O = 2-N,3-O-bis[(3R)-3-hydroxytetradecanoyl]-alpha-D-glucosaminyl 1-phosphate + UMP + 2 H(+)</text>
        <dbReference type="Rhea" id="RHEA:25213"/>
        <dbReference type="ChEBI" id="CHEBI:15377"/>
        <dbReference type="ChEBI" id="CHEBI:15378"/>
        <dbReference type="ChEBI" id="CHEBI:57865"/>
        <dbReference type="ChEBI" id="CHEBI:57957"/>
        <dbReference type="ChEBI" id="CHEBI:78847"/>
        <dbReference type="EC" id="3.6.1.54"/>
    </reaction>
</comment>
<comment type="cofactor">
    <cofactor evidence="1">
        <name>Mn(2+)</name>
        <dbReference type="ChEBI" id="CHEBI:29035"/>
    </cofactor>
    <text evidence="1">Binds 2 Mn(2+) ions per subunit in a binuclear metal center.</text>
</comment>
<comment type="pathway">
    <text evidence="1">Glycolipid biosynthesis; lipid IV(A) biosynthesis; lipid IV(A) from (3R)-3-hydroxytetradecanoyl-[acyl-carrier-protein] and UDP-N-acetyl-alpha-D-glucosamine: step 4/6.</text>
</comment>
<comment type="subcellular location">
    <subcellularLocation>
        <location evidence="1">Cell inner membrane</location>
        <topology evidence="1">Peripheral membrane protein</topology>
        <orientation evidence="1">Cytoplasmic side</orientation>
    </subcellularLocation>
</comment>
<comment type="similarity">
    <text evidence="1">Belongs to the LpxH family.</text>
</comment>
<dbReference type="EC" id="3.6.1.54" evidence="1"/>
<dbReference type="EMBL" id="AE016795">
    <property type="protein sequence ID" value="AAO11243.2"/>
    <property type="molecule type" value="Genomic_DNA"/>
</dbReference>
<dbReference type="RefSeq" id="WP_011080730.1">
    <property type="nucleotide sequence ID" value="NC_004459.3"/>
</dbReference>
<dbReference type="SMR" id="Q8D8Q9"/>
<dbReference type="KEGG" id="vvu:VV1_2910"/>
<dbReference type="HOGENOM" id="CLU_074586_0_0_6"/>
<dbReference type="UniPathway" id="UPA00359">
    <property type="reaction ID" value="UER00480"/>
</dbReference>
<dbReference type="Proteomes" id="UP000002275">
    <property type="component" value="Chromosome 1"/>
</dbReference>
<dbReference type="GO" id="GO:0005737">
    <property type="term" value="C:cytoplasm"/>
    <property type="evidence" value="ECO:0007669"/>
    <property type="project" value="InterPro"/>
</dbReference>
<dbReference type="GO" id="GO:0019897">
    <property type="term" value="C:extrinsic component of plasma membrane"/>
    <property type="evidence" value="ECO:0007669"/>
    <property type="project" value="UniProtKB-UniRule"/>
</dbReference>
<dbReference type="GO" id="GO:0030145">
    <property type="term" value="F:manganese ion binding"/>
    <property type="evidence" value="ECO:0007669"/>
    <property type="project" value="UniProtKB-UniRule"/>
</dbReference>
<dbReference type="GO" id="GO:0008758">
    <property type="term" value="F:UDP-2,3-diacylglucosamine hydrolase activity"/>
    <property type="evidence" value="ECO:0007669"/>
    <property type="project" value="UniProtKB-UniRule"/>
</dbReference>
<dbReference type="GO" id="GO:0009245">
    <property type="term" value="P:lipid A biosynthetic process"/>
    <property type="evidence" value="ECO:0007669"/>
    <property type="project" value="UniProtKB-UniRule"/>
</dbReference>
<dbReference type="CDD" id="cd07398">
    <property type="entry name" value="MPP_YbbF-LpxH"/>
    <property type="match status" value="1"/>
</dbReference>
<dbReference type="Gene3D" id="3.60.21.10">
    <property type="match status" value="1"/>
</dbReference>
<dbReference type="HAMAP" id="MF_00575">
    <property type="entry name" value="LpxH"/>
    <property type="match status" value="1"/>
</dbReference>
<dbReference type="InterPro" id="IPR004843">
    <property type="entry name" value="Calcineurin-like_PHP_ApaH"/>
</dbReference>
<dbReference type="InterPro" id="IPR043461">
    <property type="entry name" value="LpxH-like"/>
</dbReference>
<dbReference type="InterPro" id="IPR029052">
    <property type="entry name" value="Metallo-depent_PP-like"/>
</dbReference>
<dbReference type="InterPro" id="IPR010138">
    <property type="entry name" value="UDP-diacylglucosamine_Hdrlase"/>
</dbReference>
<dbReference type="NCBIfam" id="TIGR01854">
    <property type="entry name" value="lipid_A_lpxH"/>
    <property type="match status" value="1"/>
</dbReference>
<dbReference type="NCBIfam" id="NF003743">
    <property type="entry name" value="PRK05340.1"/>
    <property type="match status" value="1"/>
</dbReference>
<dbReference type="PANTHER" id="PTHR34990:SF1">
    <property type="entry name" value="UDP-2,3-DIACYLGLUCOSAMINE HYDROLASE"/>
    <property type="match status" value="1"/>
</dbReference>
<dbReference type="PANTHER" id="PTHR34990">
    <property type="entry name" value="UDP-2,3-DIACYLGLUCOSAMINE HYDROLASE-RELATED"/>
    <property type="match status" value="1"/>
</dbReference>
<dbReference type="Pfam" id="PF00149">
    <property type="entry name" value="Metallophos"/>
    <property type="match status" value="1"/>
</dbReference>
<dbReference type="SUPFAM" id="SSF56300">
    <property type="entry name" value="Metallo-dependent phosphatases"/>
    <property type="match status" value="1"/>
</dbReference>
<gene>
    <name evidence="1" type="primary">lpxH</name>
    <name type="ordered locus">VV1_2910</name>
</gene>
<accession>Q8D8Q9</accession>
<organism>
    <name type="scientific">Vibrio vulnificus (strain CMCP6)</name>
    <dbReference type="NCBI Taxonomy" id="216895"/>
    <lineage>
        <taxon>Bacteria</taxon>
        <taxon>Pseudomonadati</taxon>
        <taxon>Pseudomonadota</taxon>
        <taxon>Gammaproteobacteria</taxon>
        <taxon>Vibrionales</taxon>
        <taxon>Vibrionaceae</taxon>
        <taxon>Vibrio</taxon>
    </lineage>
</organism>
<reference key="1">
    <citation type="submission" date="2002-12" db="EMBL/GenBank/DDBJ databases">
        <title>Complete genome sequence of Vibrio vulnificus CMCP6.</title>
        <authorList>
            <person name="Rhee J.H."/>
            <person name="Kim S.Y."/>
            <person name="Chung S.S."/>
            <person name="Kim J.J."/>
            <person name="Moon Y.H."/>
            <person name="Jeong H."/>
            <person name="Choy H.E."/>
        </authorList>
    </citation>
    <scope>NUCLEOTIDE SEQUENCE [LARGE SCALE GENOMIC DNA]</scope>
    <source>
        <strain>CMCP6</strain>
    </source>
</reference>
<name>LPXH_VIBVU</name>
<sequence length="243" mass="28461">MTTLFISDLHLTPSRTDITECFVQFMRNEAVNAEALYVLGDLFEFWIGDEDCTPFAERIRNEFKALTTSGVPVYFIQGNRDFLLGQRFCRETGITLLDDVCTIDLYGEKVVILHGDTLCIDDLKYQEFRKTVHQRWLQWIFKRIPWFIKKRIVAKVQSGVRDDKQHKSLEIMDVNQQEVAQVMSQFCVKLMIHGHTHRPNIHHFEHDNLPLTRIVLGDWYSQGSVLKVTADGYSLEQRPFFTE</sequence>